<reference key="1">
    <citation type="journal article" date="1996" name="Microbiology">
        <title>A 22 kb DNA sequence in the cspB-glpPFKD region at 75 degrees on the Bacillus subtilis chromosome.</title>
        <authorList>
            <person name="Noback M.A."/>
            <person name="Terpstra P."/>
            <person name="Holsappel S."/>
            <person name="Venema G."/>
            <person name="Bron S."/>
        </authorList>
    </citation>
    <scope>NUCLEOTIDE SEQUENCE [GENOMIC DNA]</scope>
    <source>
        <strain>168</strain>
    </source>
</reference>
<reference key="2">
    <citation type="journal article" date="1997" name="Nature">
        <title>The complete genome sequence of the Gram-positive bacterium Bacillus subtilis.</title>
        <authorList>
            <person name="Kunst F."/>
            <person name="Ogasawara N."/>
            <person name="Moszer I."/>
            <person name="Albertini A.M."/>
            <person name="Alloni G."/>
            <person name="Azevedo V."/>
            <person name="Bertero M.G."/>
            <person name="Bessieres P."/>
            <person name="Bolotin A."/>
            <person name="Borchert S."/>
            <person name="Borriss R."/>
            <person name="Boursier L."/>
            <person name="Brans A."/>
            <person name="Braun M."/>
            <person name="Brignell S.C."/>
            <person name="Bron S."/>
            <person name="Brouillet S."/>
            <person name="Bruschi C.V."/>
            <person name="Caldwell B."/>
            <person name="Capuano V."/>
            <person name="Carter N.M."/>
            <person name="Choi S.-K."/>
            <person name="Codani J.-J."/>
            <person name="Connerton I.F."/>
            <person name="Cummings N.J."/>
            <person name="Daniel R.A."/>
            <person name="Denizot F."/>
            <person name="Devine K.M."/>
            <person name="Duesterhoeft A."/>
            <person name="Ehrlich S.D."/>
            <person name="Emmerson P.T."/>
            <person name="Entian K.-D."/>
            <person name="Errington J."/>
            <person name="Fabret C."/>
            <person name="Ferrari E."/>
            <person name="Foulger D."/>
            <person name="Fritz C."/>
            <person name="Fujita M."/>
            <person name="Fujita Y."/>
            <person name="Fuma S."/>
            <person name="Galizzi A."/>
            <person name="Galleron N."/>
            <person name="Ghim S.-Y."/>
            <person name="Glaser P."/>
            <person name="Goffeau A."/>
            <person name="Golightly E.J."/>
            <person name="Grandi G."/>
            <person name="Guiseppi G."/>
            <person name="Guy B.J."/>
            <person name="Haga K."/>
            <person name="Haiech J."/>
            <person name="Harwood C.R."/>
            <person name="Henaut A."/>
            <person name="Hilbert H."/>
            <person name="Holsappel S."/>
            <person name="Hosono S."/>
            <person name="Hullo M.-F."/>
            <person name="Itaya M."/>
            <person name="Jones L.-M."/>
            <person name="Joris B."/>
            <person name="Karamata D."/>
            <person name="Kasahara Y."/>
            <person name="Klaerr-Blanchard M."/>
            <person name="Klein C."/>
            <person name="Kobayashi Y."/>
            <person name="Koetter P."/>
            <person name="Koningstein G."/>
            <person name="Krogh S."/>
            <person name="Kumano M."/>
            <person name="Kurita K."/>
            <person name="Lapidus A."/>
            <person name="Lardinois S."/>
            <person name="Lauber J."/>
            <person name="Lazarevic V."/>
            <person name="Lee S.-M."/>
            <person name="Levine A."/>
            <person name="Liu H."/>
            <person name="Masuda S."/>
            <person name="Mauel C."/>
            <person name="Medigue C."/>
            <person name="Medina N."/>
            <person name="Mellado R.P."/>
            <person name="Mizuno M."/>
            <person name="Moestl D."/>
            <person name="Nakai S."/>
            <person name="Noback M."/>
            <person name="Noone D."/>
            <person name="O'Reilly M."/>
            <person name="Ogawa K."/>
            <person name="Ogiwara A."/>
            <person name="Oudega B."/>
            <person name="Park S.-H."/>
            <person name="Parro V."/>
            <person name="Pohl T.M."/>
            <person name="Portetelle D."/>
            <person name="Porwollik S."/>
            <person name="Prescott A.M."/>
            <person name="Presecan E."/>
            <person name="Pujic P."/>
            <person name="Purnelle B."/>
            <person name="Rapoport G."/>
            <person name="Rey M."/>
            <person name="Reynolds S."/>
            <person name="Rieger M."/>
            <person name="Rivolta C."/>
            <person name="Rocha E."/>
            <person name="Roche B."/>
            <person name="Rose M."/>
            <person name="Sadaie Y."/>
            <person name="Sato T."/>
            <person name="Scanlan E."/>
            <person name="Schleich S."/>
            <person name="Schroeter R."/>
            <person name="Scoffone F."/>
            <person name="Sekiguchi J."/>
            <person name="Sekowska A."/>
            <person name="Seror S.J."/>
            <person name="Serror P."/>
            <person name="Shin B.-S."/>
            <person name="Soldo B."/>
            <person name="Sorokin A."/>
            <person name="Tacconi E."/>
            <person name="Takagi T."/>
            <person name="Takahashi H."/>
            <person name="Takemaru K."/>
            <person name="Takeuchi M."/>
            <person name="Tamakoshi A."/>
            <person name="Tanaka T."/>
            <person name="Terpstra P."/>
            <person name="Tognoni A."/>
            <person name="Tosato V."/>
            <person name="Uchiyama S."/>
            <person name="Vandenbol M."/>
            <person name="Vannier F."/>
            <person name="Vassarotti A."/>
            <person name="Viari A."/>
            <person name="Wambutt R."/>
            <person name="Wedler E."/>
            <person name="Wedler H."/>
            <person name="Weitzenegger T."/>
            <person name="Winters P."/>
            <person name="Wipat A."/>
            <person name="Yamamoto H."/>
            <person name="Yamane K."/>
            <person name="Yasumoto K."/>
            <person name="Yata K."/>
            <person name="Yoshida K."/>
            <person name="Yoshikawa H.-F."/>
            <person name="Zumstein E."/>
            <person name="Yoshikawa H."/>
            <person name="Danchin A."/>
        </authorList>
    </citation>
    <scope>NUCLEOTIDE SEQUENCE [LARGE SCALE GENOMIC DNA]</scope>
    <source>
        <strain>168</strain>
    </source>
</reference>
<reference key="3">
    <citation type="submission" date="1996-05" db="EMBL/GenBank/DDBJ databases">
        <authorList>
            <person name="Wendrich T.M."/>
            <person name="Marahiel M.A."/>
        </authorList>
    </citation>
    <scope>NUCLEOTIDE SEQUENCE [GENOMIC DNA] OF 161-359</scope>
    <source>
        <strain>168 / JH642</strain>
    </source>
</reference>
<dbReference type="EMBL" id="X96983">
    <property type="protein sequence ID" value="CAA65695.1"/>
    <property type="molecule type" value="Genomic_DNA"/>
</dbReference>
<dbReference type="EMBL" id="AL009126">
    <property type="protein sequence ID" value="CAB12740.1"/>
    <property type="molecule type" value="Genomic_DNA"/>
</dbReference>
<dbReference type="EMBL" id="U58859">
    <property type="protein sequence ID" value="AAB01344.1"/>
    <property type="molecule type" value="Genomic_DNA"/>
</dbReference>
<dbReference type="PIR" id="G69822">
    <property type="entry name" value="G69822"/>
</dbReference>
<dbReference type="SMR" id="P54595"/>
<dbReference type="FunCoup" id="P54595">
    <property type="interactions" value="146"/>
</dbReference>
<dbReference type="STRING" id="224308.BSU09120"/>
<dbReference type="PaxDb" id="224308-BSU09120"/>
<dbReference type="EnsemblBacteria" id="CAB12740">
    <property type="protein sequence ID" value="CAB12740"/>
    <property type="gene ID" value="BSU_09120"/>
</dbReference>
<dbReference type="GeneID" id="936246"/>
<dbReference type="KEGG" id="bsu:BSU09120"/>
<dbReference type="PATRIC" id="fig|224308.179.peg.986"/>
<dbReference type="eggNOG" id="COG3706">
    <property type="taxonomic scope" value="Bacteria"/>
</dbReference>
<dbReference type="InParanoid" id="P54595"/>
<dbReference type="OrthoDB" id="9759607at2"/>
<dbReference type="PhylomeDB" id="P54595"/>
<dbReference type="BioCyc" id="BSUB:BSU09120-MONOMER"/>
<dbReference type="Proteomes" id="UP000001570">
    <property type="component" value="Chromosome"/>
</dbReference>
<dbReference type="GO" id="GO:0005886">
    <property type="term" value="C:plasma membrane"/>
    <property type="evidence" value="ECO:0000318"/>
    <property type="project" value="GO_Central"/>
</dbReference>
<dbReference type="GO" id="GO:0052621">
    <property type="term" value="F:diguanylate cyclase activity"/>
    <property type="evidence" value="ECO:0000318"/>
    <property type="project" value="GO_Central"/>
</dbReference>
<dbReference type="GO" id="GO:0000155">
    <property type="term" value="F:phosphorelay sensor kinase activity"/>
    <property type="evidence" value="ECO:0007669"/>
    <property type="project" value="InterPro"/>
</dbReference>
<dbReference type="GO" id="GO:0043709">
    <property type="term" value="P:cell adhesion involved in single-species biofilm formation"/>
    <property type="evidence" value="ECO:0000318"/>
    <property type="project" value="GO_Central"/>
</dbReference>
<dbReference type="GO" id="GO:0071555">
    <property type="term" value="P:cell wall organization"/>
    <property type="evidence" value="ECO:0007669"/>
    <property type="project" value="InterPro"/>
</dbReference>
<dbReference type="GO" id="GO:1902201">
    <property type="term" value="P:negative regulation of bacterial-type flagellum-dependent cell motility"/>
    <property type="evidence" value="ECO:0000318"/>
    <property type="project" value="GO_Central"/>
</dbReference>
<dbReference type="CDD" id="cd01949">
    <property type="entry name" value="GGDEF"/>
    <property type="match status" value="1"/>
</dbReference>
<dbReference type="FunFam" id="3.30.70.270:FF:000136">
    <property type="entry name" value="Diguanylate cyclase or phosphodiesterase"/>
    <property type="match status" value="1"/>
</dbReference>
<dbReference type="Gene3D" id="3.30.70.270">
    <property type="match status" value="1"/>
</dbReference>
<dbReference type="InterPro" id="IPR050469">
    <property type="entry name" value="Diguanylate_Cyclase"/>
</dbReference>
<dbReference type="InterPro" id="IPR000160">
    <property type="entry name" value="GGDEF_dom"/>
</dbReference>
<dbReference type="InterPro" id="IPR029787">
    <property type="entry name" value="Nucleotide_cyclase"/>
</dbReference>
<dbReference type="InterPro" id="IPR043128">
    <property type="entry name" value="Rev_trsase/Diguanyl_cyclase"/>
</dbReference>
<dbReference type="InterPro" id="IPR011620">
    <property type="entry name" value="Sig_transdc_His_kinase_LytS_TM"/>
</dbReference>
<dbReference type="NCBIfam" id="TIGR00254">
    <property type="entry name" value="GGDEF"/>
    <property type="match status" value="1"/>
</dbReference>
<dbReference type="PANTHER" id="PTHR45138:SF9">
    <property type="entry name" value="DIGUANYLATE CYCLASE DGCM-RELATED"/>
    <property type="match status" value="1"/>
</dbReference>
<dbReference type="PANTHER" id="PTHR45138">
    <property type="entry name" value="REGULATORY COMPONENTS OF SENSORY TRANSDUCTION SYSTEM"/>
    <property type="match status" value="1"/>
</dbReference>
<dbReference type="Pfam" id="PF07694">
    <property type="entry name" value="5TM-5TMR_LYT"/>
    <property type="match status" value="1"/>
</dbReference>
<dbReference type="Pfam" id="PF00990">
    <property type="entry name" value="GGDEF"/>
    <property type="match status" value="1"/>
</dbReference>
<dbReference type="SMART" id="SM00267">
    <property type="entry name" value="GGDEF"/>
    <property type="match status" value="1"/>
</dbReference>
<dbReference type="SUPFAM" id="SSF55073">
    <property type="entry name" value="Nucleotide cyclase"/>
    <property type="match status" value="1"/>
</dbReference>
<dbReference type="PROSITE" id="PS50887">
    <property type="entry name" value="GGDEF"/>
    <property type="match status" value="1"/>
</dbReference>
<sequence>MLKELFVNLTILITFNYLFTHLFKERLVHKKDSISFQAVKGLACGLLGVILMVFGFTYQHSIIDLRNIPIMIAALYGGWVSTATALAMITAGRLLITMNTSALYSVIIICIAAIPSLIVSRRKKVQLKHAFYLLIITNSLISFSFYFLIDLHSYELHLYFWIISIAGGMLSLYIIDHETNAHLLFKQYKFQAHFDFLTGVYNRRKFEETTKALYQQAADTPHFQFALIYMDIDHFKTINDQYGHHEGDQVLKELGLRLKQTIRNTDPAARIGGEEFAVLLPNCSLDKAARIAERIRSTVSDAPIVLTNGDELSVTISLGAAHYPNNTEQPGSLPILADQMLYKAKETGRNRVCFSEKKE</sequence>
<accession>P54595</accession>
<comment type="subcellular location">
    <subcellularLocation>
        <location evidence="3">Cell membrane</location>
        <topology evidence="3">Multi-pass membrane protein</topology>
    </subcellularLocation>
</comment>
<feature type="chain" id="PRO_0000049561" description="Uncharacterized protein YhcK">
    <location>
        <begin position="1"/>
        <end position="359"/>
    </location>
</feature>
<feature type="transmembrane region" description="Helical" evidence="1">
    <location>
        <begin position="4"/>
        <end position="24"/>
    </location>
</feature>
<feature type="transmembrane region" description="Helical" evidence="1">
    <location>
        <begin position="36"/>
        <end position="56"/>
    </location>
</feature>
<feature type="transmembrane region" description="Helical" evidence="1">
    <location>
        <begin position="68"/>
        <end position="88"/>
    </location>
</feature>
<feature type="transmembrane region" description="Helical" evidence="1">
    <location>
        <begin position="94"/>
        <end position="114"/>
    </location>
</feature>
<feature type="transmembrane region" description="Helical" evidence="1">
    <location>
        <begin position="129"/>
        <end position="149"/>
    </location>
</feature>
<feature type="transmembrane region" description="Helical" evidence="1">
    <location>
        <begin position="155"/>
        <end position="175"/>
    </location>
</feature>
<feature type="domain" description="GGDEF" evidence="2">
    <location>
        <begin position="223"/>
        <end position="357"/>
    </location>
</feature>
<feature type="sequence conflict" description="In Ref. 3; AAB01344." evidence="3" ref="3">
    <original>W</original>
    <variation>S</variation>
    <location>
        <position position="161"/>
    </location>
</feature>
<protein>
    <recommendedName>
        <fullName>Uncharacterized protein YhcK</fullName>
    </recommendedName>
</protein>
<name>YHCK_BACSU</name>
<gene>
    <name type="primary">yhcK</name>
    <name type="ordered locus">BSU09120</name>
</gene>
<evidence type="ECO:0000255" key="1"/>
<evidence type="ECO:0000255" key="2">
    <source>
        <dbReference type="PROSITE-ProRule" id="PRU00095"/>
    </source>
</evidence>
<evidence type="ECO:0000305" key="3"/>
<keyword id="KW-1003">Cell membrane</keyword>
<keyword id="KW-0472">Membrane</keyword>
<keyword id="KW-1185">Reference proteome</keyword>
<keyword id="KW-0812">Transmembrane</keyword>
<keyword id="KW-1133">Transmembrane helix</keyword>
<organism>
    <name type="scientific">Bacillus subtilis (strain 168)</name>
    <dbReference type="NCBI Taxonomy" id="224308"/>
    <lineage>
        <taxon>Bacteria</taxon>
        <taxon>Bacillati</taxon>
        <taxon>Bacillota</taxon>
        <taxon>Bacilli</taxon>
        <taxon>Bacillales</taxon>
        <taxon>Bacillaceae</taxon>
        <taxon>Bacillus</taxon>
    </lineage>
</organism>
<proteinExistence type="predicted"/>